<feature type="chain" id="PRO_1000006055" description="Elongation factor Ts">
    <location>
        <begin position="1"/>
        <end position="329"/>
    </location>
</feature>
<feature type="region of interest" description="Involved in Mg(2+) ion dislocation from EF-Tu" evidence="1">
    <location>
        <begin position="79"/>
        <end position="82"/>
    </location>
</feature>
<sequence>MAVTMAEITKLRKISGAGMMDCKNALTEANGDIDKAMEIIRKKGQAVAAKRSDREASEGCVLAKKDGEFAAIIALKCETDFVAKNADFVALTQAILDAAVANRCKTLEEVKALPMGNGTVQDAVTDRSGITGEKMELDGYNVVEGAYTSIYNHQGNNQLCTIVAMNKEAEAAAHGVAMQIAAMNPIAIDEAGVPESVKEAEIQVAIDKTKKEQVDKAVEVALKKAGINPAHVDSEEHMESNKAKGWITDEDIAKAKEIIATVSAEKAANLPQQMIENIAKGRLGKFLKEVCLLNQEDIMDGKKTVREVLKEADPELQIVAFKRFTLRAE</sequence>
<evidence type="ECO:0000255" key="1">
    <source>
        <dbReference type="HAMAP-Rule" id="MF_00050"/>
    </source>
</evidence>
<protein>
    <recommendedName>
        <fullName evidence="1">Elongation factor Ts</fullName>
        <shortName evidence="1">EF-Ts</shortName>
    </recommendedName>
</protein>
<name>EFTS_PHOV8</name>
<proteinExistence type="inferred from homology"/>
<keyword id="KW-0963">Cytoplasm</keyword>
<keyword id="KW-0251">Elongation factor</keyword>
<keyword id="KW-0648">Protein biosynthesis</keyword>
<comment type="function">
    <text evidence="1">Associates with the EF-Tu.GDP complex and induces the exchange of GDP to GTP. It remains bound to the aminoacyl-tRNA.EF-Tu.GTP complex up to the GTP hydrolysis stage on the ribosome.</text>
</comment>
<comment type="subcellular location">
    <subcellularLocation>
        <location evidence="1">Cytoplasm</location>
    </subcellularLocation>
</comment>
<comment type="similarity">
    <text evidence="1">Belongs to the EF-Ts family.</text>
</comment>
<accession>A6L0V2</accession>
<dbReference type="EMBL" id="CP000139">
    <property type="protein sequence ID" value="ABR39316.1"/>
    <property type="molecule type" value="Genomic_DNA"/>
</dbReference>
<dbReference type="RefSeq" id="WP_005839201.1">
    <property type="nucleotide sequence ID" value="NZ_JANSWM010000064.1"/>
</dbReference>
<dbReference type="SMR" id="A6L0V2"/>
<dbReference type="STRING" id="435590.BVU_1635"/>
<dbReference type="PaxDb" id="435590-BVU_1635"/>
<dbReference type="GeneID" id="5302601"/>
<dbReference type="KEGG" id="bvu:BVU_1635"/>
<dbReference type="eggNOG" id="COG0264">
    <property type="taxonomic scope" value="Bacteria"/>
</dbReference>
<dbReference type="HOGENOM" id="CLU_047155_0_0_10"/>
<dbReference type="BioCyc" id="BVUL435590:G1G59-1720-MONOMER"/>
<dbReference type="Proteomes" id="UP000002861">
    <property type="component" value="Chromosome"/>
</dbReference>
<dbReference type="GO" id="GO:0005737">
    <property type="term" value="C:cytoplasm"/>
    <property type="evidence" value="ECO:0007669"/>
    <property type="project" value="UniProtKB-SubCell"/>
</dbReference>
<dbReference type="GO" id="GO:0003746">
    <property type="term" value="F:translation elongation factor activity"/>
    <property type="evidence" value="ECO:0007669"/>
    <property type="project" value="UniProtKB-UniRule"/>
</dbReference>
<dbReference type="CDD" id="cd14275">
    <property type="entry name" value="UBA_EF-Ts"/>
    <property type="match status" value="1"/>
</dbReference>
<dbReference type="FunFam" id="1.10.8.10:FF:000001">
    <property type="entry name" value="Elongation factor Ts"/>
    <property type="match status" value="1"/>
</dbReference>
<dbReference type="Gene3D" id="1.10.286.20">
    <property type="match status" value="1"/>
</dbReference>
<dbReference type="Gene3D" id="1.10.8.10">
    <property type="entry name" value="DNA helicase RuvA subunit, C-terminal domain"/>
    <property type="match status" value="1"/>
</dbReference>
<dbReference type="Gene3D" id="3.30.479.20">
    <property type="entry name" value="Elongation factor Ts, dimerisation domain"/>
    <property type="match status" value="2"/>
</dbReference>
<dbReference type="HAMAP" id="MF_00050">
    <property type="entry name" value="EF_Ts"/>
    <property type="match status" value="1"/>
</dbReference>
<dbReference type="InterPro" id="IPR036402">
    <property type="entry name" value="EF-Ts_dimer_sf"/>
</dbReference>
<dbReference type="InterPro" id="IPR001816">
    <property type="entry name" value="Transl_elong_EFTs/EF1B"/>
</dbReference>
<dbReference type="InterPro" id="IPR014039">
    <property type="entry name" value="Transl_elong_EFTs/EF1B_dimer"/>
</dbReference>
<dbReference type="InterPro" id="IPR018101">
    <property type="entry name" value="Transl_elong_Ts_CS"/>
</dbReference>
<dbReference type="InterPro" id="IPR009060">
    <property type="entry name" value="UBA-like_sf"/>
</dbReference>
<dbReference type="NCBIfam" id="TIGR00116">
    <property type="entry name" value="tsf"/>
    <property type="match status" value="1"/>
</dbReference>
<dbReference type="PANTHER" id="PTHR11741">
    <property type="entry name" value="ELONGATION FACTOR TS"/>
    <property type="match status" value="1"/>
</dbReference>
<dbReference type="PANTHER" id="PTHR11741:SF0">
    <property type="entry name" value="ELONGATION FACTOR TS, MITOCHONDRIAL"/>
    <property type="match status" value="1"/>
</dbReference>
<dbReference type="Pfam" id="PF00889">
    <property type="entry name" value="EF_TS"/>
    <property type="match status" value="2"/>
</dbReference>
<dbReference type="SUPFAM" id="SSF54713">
    <property type="entry name" value="Elongation factor Ts (EF-Ts), dimerisation domain"/>
    <property type="match status" value="2"/>
</dbReference>
<dbReference type="SUPFAM" id="SSF46934">
    <property type="entry name" value="UBA-like"/>
    <property type="match status" value="1"/>
</dbReference>
<dbReference type="PROSITE" id="PS01126">
    <property type="entry name" value="EF_TS_1"/>
    <property type="match status" value="1"/>
</dbReference>
<dbReference type="PROSITE" id="PS01127">
    <property type="entry name" value="EF_TS_2"/>
    <property type="match status" value="1"/>
</dbReference>
<reference key="1">
    <citation type="journal article" date="2007" name="PLoS Biol.">
        <title>Evolution of symbiotic bacteria in the distal human intestine.</title>
        <authorList>
            <person name="Xu J."/>
            <person name="Mahowald M.A."/>
            <person name="Ley R.E."/>
            <person name="Lozupone C.A."/>
            <person name="Hamady M."/>
            <person name="Martens E.C."/>
            <person name="Henrissat B."/>
            <person name="Coutinho P.M."/>
            <person name="Minx P."/>
            <person name="Latreille P."/>
            <person name="Cordum H."/>
            <person name="Van Brunt A."/>
            <person name="Kim K."/>
            <person name="Fulton R.S."/>
            <person name="Fulton L.A."/>
            <person name="Clifton S.W."/>
            <person name="Wilson R.K."/>
            <person name="Knight R.D."/>
            <person name="Gordon J.I."/>
        </authorList>
    </citation>
    <scope>NUCLEOTIDE SEQUENCE [LARGE SCALE GENOMIC DNA]</scope>
    <source>
        <strain>ATCC 8482 / DSM 1447 / JCM 5826 / CCUG 4940 / NBRC 14291 / NCTC 11154</strain>
    </source>
</reference>
<organism>
    <name type="scientific">Phocaeicola vulgatus (strain ATCC 8482 / DSM 1447 / JCM 5826 / CCUG 4940 / NBRC 14291 / NCTC 11154)</name>
    <name type="common">Bacteroides vulgatus</name>
    <dbReference type="NCBI Taxonomy" id="435590"/>
    <lineage>
        <taxon>Bacteria</taxon>
        <taxon>Pseudomonadati</taxon>
        <taxon>Bacteroidota</taxon>
        <taxon>Bacteroidia</taxon>
        <taxon>Bacteroidales</taxon>
        <taxon>Bacteroidaceae</taxon>
        <taxon>Phocaeicola</taxon>
    </lineage>
</organism>
<gene>
    <name evidence="1" type="primary">tsf</name>
    <name type="ordered locus">BVU_1635</name>
</gene>